<evidence type="ECO:0000250" key="1"/>
<evidence type="ECO:0000255" key="2"/>
<evidence type="ECO:0000256" key="3">
    <source>
        <dbReference type="SAM" id="MobiDB-lite"/>
    </source>
</evidence>
<evidence type="ECO:0000269" key="4">
    <source>
    </source>
</evidence>
<evidence type="ECO:0000269" key="5">
    <source>
    </source>
</evidence>
<evidence type="ECO:0000269" key="6">
    <source>
    </source>
</evidence>
<evidence type="ECO:0000269" key="7">
    <source>
    </source>
</evidence>
<evidence type="ECO:0000269" key="8">
    <source>
    </source>
</evidence>
<evidence type="ECO:0000269" key="9">
    <source>
    </source>
</evidence>
<evidence type="ECO:0000269" key="10">
    <source>
    </source>
</evidence>
<evidence type="ECO:0000269" key="11">
    <source>
    </source>
</evidence>
<evidence type="ECO:0000269" key="12">
    <source>
    </source>
</evidence>
<evidence type="ECO:0000269" key="13">
    <source>
    </source>
</evidence>
<evidence type="ECO:0000269" key="14">
    <source>
    </source>
</evidence>
<evidence type="ECO:0000269" key="15">
    <source>
    </source>
</evidence>
<evidence type="ECO:0000269" key="16">
    <source>
    </source>
</evidence>
<evidence type="ECO:0000269" key="17">
    <source>
    </source>
</evidence>
<evidence type="ECO:0000269" key="18">
    <source>
    </source>
</evidence>
<evidence type="ECO:0000269" key="19">
    <source ref="3"/>
</evidence>
<evidence type="ECO:0000303" key="20">
    <source>
    </source>
</evidence>
<evidence type="ECO:0000305" key="21"/>
<evidence type="ECO:0007744" key="22">
    <source>
    </source>
</evidence>
<evidence type="ECO:0007744" key="23">
    <source>
    </source>
</evidence>
<evidence type="ECO:0007744" key="24">
    <source>
    </source>
</evidence>
<evidence type="ECO:0007829" key="25">
    <source>
        <dbReference type="PDB" id="9EY0"/>
    </source>
</evidence>
<evidence type="ECO:0007829" key="26">
    <source>
        <dbReference type="PDB" id="9EY2"/>
    </source>
</evidence>
<gene>
    <name type="primary">ELAC2</name>
    <name type="synonym">HPC2</name>
</gene>
<reference key="1">
    <citation type="journal article" date="2001" name="Nat. Genet.">
        <title>A candidate prostate cancer susceptibility gene at chromosome 17p.</title>
        <authorList>
            <person name="Tavtigian S.V."/>
            <person name="Simard J."/>
            <person name="Teng D.H.F."/>
            <person name="Abtin V."/>
            <person name="Baumgard M."/>
            <person name="Beck A."/>
            <person name="Camp N.J."/>
            <person name="Carillo A.R."/>
            <person name="Chen Y."/>
            <person name="Dayananth P."/>
            <person name="Desrochers M."/>
            <person name="Dumont M."/>
            <person name="Farnham J.M."/>
            <person name="Frank D."/>
            <person name="Frye C."/>
            <person name="Ghaffari S."/>
            <person name="Gupte J.S."/>
            <person name="Hu R."/>
            <person name="Iliev D."/>
            <person name="Janecki T."/>
            <person name="Kort E.N."/>
            <person name="Laity K.E."/>
            <person name="Leavitt A."/>
            <person name="Leblanc G."/>
            <person name="McArthur-Morrison J."/>
            <person name="Pederson A."/>
            <person name="Penn B."/>
            <person name="Peterson K.T."/>
            <person name="Reid J.E."/>
            <person name="Richards S."/>
            <person name="Schroeder M."/>
            <person name="Smith R."/>
            <person name="Snyder S.C."/>
            <person name="Swedlund B."/>
            <person name="Swensen J."/>
            <person name="Thomas A."/>
            <person name="Tranchant M."/>
            <person name="Woodland A.-M."/>
            <person name="Labrie F."/>
            <person name="Skolnick M.H."/>
            <person name="Neuhausen S."/>
            <person name="Rommens J."/>
            <person name="Cannon-Albright L.A."/>
        </authorList>
    </citation>
    <scope>NUCLEOTIDE SEQUENCE [MRNA] (ISOFORM 1)</scope>
    <scope>TISSUE SPECIFICITY</scope>
    <scope>VARIANTS HPC2 LEU-217; THR-541 AND HIS-781</scope>
</reference>
<reference key="2">
    <citation type="journal article" date="2004" name="Nat. Genet.">
        <title>Complete sequencing and characterization of 21,243 full-length human cDNAs.</title>
        <authorList>
            <person name="Ota T."/>
            <person name="Suzuki Y."/>
            <person name="Nishikawa T."/>
            <person name="Otsuki T."/>
            <person name="Sugiyama T."/>
            <person name="Irie R."/>
            <person name="Wakamatsu A."/>
            <person name="Hayashi K."/>
            <person name="Sato H."/>
            <person name="Nagai K."/>
            <person name="Kimura K."/>
            <person name="Makita H."/>
            <person name="Sekine M."/>
            <person name="Obayashi M."/>
            <person name="Nishi T."/>
            <person name="Shibahara T."/>
            <person name="Tanaka T."/>
            <person name="Ishii S."/>
            <person name="Yamamoto J."/>
            <person name="Saito K."/>
            <person name="Kawai Y."/>
            <person name="Isono Y."/>
            <person name="Nakamura Y."/>
            <person name="Nagahari K."/>
            <person name="Murakami K."/>
            <person name="Yasuda T."/>
            <person name="Iwayanagi T."/>
            <person name="Wagatsuma M."/>
            <person name="Shiratori A."/>
            <person name="Sudo H."/>
            <person name="Hosoiri T."/>
            <person name="Kaku Y."/>
            <person name="Kodaira H."/>
            <person name="Kondo H."/>
            <person name="Sugawara M."/>
            <person name="Takahashi M."/>
            <person name="Kanda K."/>
            <person name="Yokoi T."/>
            <person name="Furuya T."/>
            <person name="Kikkawa E."/>
            <person name="Omura Y."/>
            <person name="Abe K."/>
            <person name="Kamihara K."/>
            <person name="Katsuta N."/>
            <person name="Sato K."/>
            <person name="Tanikawa M."/>
            <person name="Yamazaki M."/>
            <person name="Ninomiya K."/>
            <person name="Ishibashi T."/>
            <person name="Yamashita H."/>
            <person name="Murakawa K."/>
            <person name="Fujimori K."/>
            <person name="Tanai H."/>
            <person name="Kimata M."/>
            <person name="Watanabe M."/>
            <person name="Hiraoka S."/>
            <person name="Chiba Y."/>
            <person name="Ishida S."/>
            <person name="Ono Y."/>
            <person name="Takiguchi S."/>
            <person name="Watanabe S."/>
            <person name="Yosida M."/>
            <person name="Hotuta T."/>
            <person name="Kusano J."/>
            <person name="Kanehori K."/>
            <person name="Takahashi-Fujii A."/>
            <person name="Hara H."/>
            <person name="Tanase T.-O."/>
            <person name="Nomura Y."/>
            <person name="Togiya S."/>
            <person name="Komai F."/>
            <person name="Hara R."/>
            <person name="Takeuchi K."/>
            <person name="Arita M."/>
            <person name="Imose N."/>
            <person name="Musashino K."/>
            <person name="Yuuki H."/>
            <person name="Oshima A."/>
            <person name="Sasaki N."/>
            <person name="Aotsuka S."/>
            <person name="Yoshikawa Y."/>
            <person name="Matsunawa H."/>
            <person name="Ichihara T."/>
            <person name="Shiohata N."/>
            <person name="Sano S."/>
            <person name="Moriya S."/>
            <person name="Momiyama H."/>
            <person name="Satoh N."/>
            <person name="Takami S."/>
            <person name="Terashima Y."/>
            <person name="Suzuki O."/>
            <person name="Nakagawa S."/>
            <person name="Senoh A."/>
            <person name="Mizoguchi H."/>
            <person name="Goto Y."/>
            <person name="Shimizu F."/>
            <person name="Wakebe H."/>
            <person name="Hishigaki H."/>
            <person name="Watanabe T."/>
            <person name="Sugiyama A."/>
            <person name="Takemoto M."/>
            <person name="Kawakami B."/>
            <person name="Yamazaki M."/>
            <person name="Watanabe K."/>
            <person name="Kumagai A."/>
            <person name="Itakura S."/>
            <person name="Fukuzumi Y."/>
            <person name="Fujimori Y."/>
            <person name="Komiyama M."/>
            <person name="Tashiro H."/>
            <person name="Tanigami A."/>
            <person name="Fujiwara T."/>
            <person name="Ono T."/>
            <person name="Yamada K."/>
            <person name="Fujii Y."/>
            <person name="Ozaki K."/>
            <person name="Hirao M."/>
            <person name="Ohmori Y."/>
            <person name="Kawabata A."/>
            <person name="Hikiji T."/>
            <person name="Kobatake N."/>
            <person name="Inagaki H."/>
            <person name="Ikema Y."/>
            <person name="Okamoto S."/>
            <person name="Okitani R."/>
            <person name="Kawakami T."/>
            <person name="Noguchi S."/>
            <person name="Itoh T."/>
            <person name="Shigeta K."/>
            <person name="Senba T."/>
            <person name="Matsumura K."/>
            <person name="Nakajima Y."/>
            <person name="Mizuno T."/>
            <person name="Morinaga M."/>
            <person name="Sasaki M."/>
            <person name="Togashi T."/>
            <person name="Oyama M."/>
            <person name="Hata H."/>
            <person name="Watanabe M."/>
            <person name="Komatsu T."/>
            <person name="Mizushima-Sugano J."/>
            <person name="Satoh T."/>
            <person name="Shirai Y."/>
            <person name="Takahashi Y."/>
            <person name="Nakagawa K."/>
            <person name="Okumura K."/>
            <person name="Nagase T."/>
            <person name="Nomura N."/>
            <person name="Kikuchi H."/>
            <person name="Masuho Y."/>
            <person name="Yamashita R."/>
            <person name="Nakai K."/>
            <person name="Yada T."/>
            <person name="Nakamura Y."/>
            <person name="Ohara O."/>
            <person name="Isogai T."/>
            <person name="Sugano S."/>
        </authorList>
    </citation>
    <scope>NUCLEOTIDE SEQUENCE [LARGE SCALE MRNA] (ISOFORMS 1; 2; 3 AND 4)</scope>
    <source>
        <tissue>Hippocampus</tissue>
        <tissue>Liver</tissue>
        <tissue>Teratocarcinoma</tissue>
        <tissue>Thalamus</tissue>
    </source>
</reference>
<reference key="3">
    <citation type="submission" date="2004-06" db="EMBL/GenBank/DDBJ databases">
        <title>Cloning of human full open reading frames in Gateway(TM) system entry vector (pDONR201).</title>
        <authorList>
            <person name="Ebert L."/>
            <person name="Schick M."/>
            <person name="Neubert P."/>
            <person name="Schatten R."/>
            <person name="Henze S."/>
            <person name="Korn B."/>
        </authorList>
    </citation>
    <scope>NUCLEOTIDE SEQUENCE [LARGE SCALE MRNA] (ISOFORM 1)</scope>
    <scope>VARIANT HPC2 LEU-217</scope>
</reference>
<reference key="4">
    <citation type="journal article" date="2006" name="Nature">
        <title>DNA sequence of human chromosome 17 and analysis of rearrangement in the human lineage.</title>
        <authorList>
            <person name="Zody M.C."/>
            <person name="Garber M."/>
            <person name="Adams D.J."/>
            <person name="Sharpe T."/>
            <person name="Harrow J."/>
            <person name="Lupski J.R."/>
            <person name="Nicholson C."/>
            <person name="Searle S.M."/>
            <person name="Wilming L."/>
            <person name="Young S.K."/>
            <person name="Abouelleil A."/>
            <person name="Allen N.R."/>
            <person name="Bi W."/>
            <person name="Bloom T."/>
            <person name="Borowsky M.L."/>
            <person name="Bugalter B.E."/>
            <person name="Butler J."/>
            <person name="Chang J.L."/>
            <person name="Chen C.-K."/>
            <person name="Cook A."/>
            <person name="Corum B."/>
            <person name="Cuomo C.A."/>
            <person name="de Jong P.J."/>
            <person name="DeCaprio D."/>
            <person name="Dewar K."/>
            <person name="FitzGerald M."/>
            <person name="Gilbert J."/>
            <person name="Gibson R."/>
            <person name="Gnerre S."/>
            <person name="Goldstein S."/>
            <person name="Grafham D.V."/>
            <person name="Grocock R."/>
            <person name="Hafez N."/>
            <person name="Hagopian D.S."/>
            <person name="Hart E."/>
            <person name="Norman C.H."/>
            <person name="Humphray S."/>
            <person name="Jaffe D.B."/>
            <person name="Jones M."/>
            <person name="Kamal M."/>
            <person name="Khodiyar V.K."/>
            <person name="LaButti K."/>
            <person name="Laird G."/>
            <person name="Lehoczky J."/>
            <person name="Liu X."/>
            <person name="Lokyitsang T."/>
            <person name="Loveland J."/>
            <person name="Lui A."/>
            <person name="Macdonald P."/>
            <person name="Major J.E."/>
            <person name="Matthews L."/>
            <person name="Mauceli E."/>
            <person name="McCarroll S.A."/>
            <person name="Mihalev A.H."/>
            <person name="Mudge J."/>
            <person name="Nguyen C."/>
            <person name="Nicol R."/>
            <person name="O'Leary S.B."/>
            <person name="Osoegawa K."/>
            <person name="Schwartz D.C."/>
            <person name="Shaw-Smith C."/>
            <person name="Stankiewicz P."/>
            <person name="Steward C."/>
            <person name="Swarbreck D."/>
            <person name="Venkataraman V."/>
            <person name="Whittaker C.A."/>
            <person name="Yang X."/>
            <person name="Zimmer A.R."/>
            <person name="Bradley A."/>
            <person name="Hubbard T."/>
            <person name="Birren B.W."/>
            <person name="Rogers J."/>
            <person name="Lander E.S."/>
            <person name="Nusbaum C."/>
        </authorList>
    </citation>
    <scope>NUCLEOTIDE SEQUENCE [LARGE SCALE GENOMIC DNA]</scope>
</reference>
<reference key="5">
    <citation type="journal article" date="2004" name="Genome Res.">
        <title>The status, quality, and expansion of the NIH full-length cDNA project: the Mammalian Gene Collection (MGC).</title>
        <authorList>
            <consortium name="The MGC Project Team"/>
        </authorList>
    </citation>
    <scope>NUCLEOTIDE SEQUENCE [LARGE SCALE MRNA] (ISOFORM 1)</scope>
    <scope>VARIANT HPC2 LEU-217</scope>
    <source>
        <tissue>Lung</tissue>
    </source>
</reference>
<reference key="6">
    <citation type="journal article" date="2003" name="Nucleic Acids Res.">
        <title>A candidate prostate cancer susceptibility gene encodes tRNA 3' processing endoribonuclease.</title>
        <authorList>
            <person name="Takaku H."/>
            <person name="Minagawa A."/>
            <person name="Takagi M."/>
            <person name="Nashimoto M."/>
        </authorList>
    </citation>
    <scope>ENZYME ACTIVITY</scope>
    <scope>CHARACTERIZATION OF VARIANTS HPC2 LEU-217; THR-541 AND HIS-781</scope>
</reference>
<reference key="7">
    <citation type="journal article" date="2008" name="Proc. Natl. Acad. Sci. U.S.A.">
        <title>A quantitative atlas of mitotic phosphorylation.</title>
        <authorList>
            <person name="Dephoure N."/>
            <person name="Zhou C."/>
            <person name="Villen J."/>
            <person name="Beausoleil S.A."/>
            <person name="Bakalarski C.E."/>
            <person name="Elledge S.J."/>
            <person name="Gygi S.P."/>
        </authorList>
    </citation>
    <scope>PHOSPHORYLATION [LARGE SCALE ANALYSIS] AT SER-199</scope>
    <scope>IDENTIFICATION BY MASS SPECTROMETRY [LARGE SCALE ANALYSIS]</scope>
    <source>
        <tissue>Cervix carcinoma</tissue>
    </source>
</reference>
<reference key="8">
    <citation type="journal article" date="2011" name="BMC Syst. Biol.">
        <title>Initial characterization of the human central proteome.</title>
        <authorList>
            <person name="Burkard T.R."/>
            <person name="Planyavsky M."/>
            <person name="Kaupe I."/>
            <person name="Breitwieser F.P."/>
            <person name="Buerckstuemmer T."/>
            <person name="Bennett K.L."/>
            <person name="Superti-Furga G."/>
            <person name="Colinge J."/>
        </authorList>
    </citation>
    <scope>IDENTIFICATION BY MASS SPECTROMETRY [LARGE SCALE ANALYSIS]</scope>
</reference>
<reference key="9">
    <citation type="journal article" date="2011" name="Cell Cycle">
        <title>RNA processing in human mitochondria.</title>
        <authorList>
            <person name="Sanchez M.I."/>
            <person name="Mercer T.R."/>
            <person name="Davies S.M."/>
            <person name="Shearwood A.M."/>
            <person name="Nygard K.K."/>
            <person name="Richman T.R."/>
            <person name="Mattick J.S."/>
            <person name="Rackham O."/>
            <person name="Filipovska A."/>
        </authorList>
    </citation>
    <scope>INTERACTION WITH PTCD1</scope>
</reference>
<reference key="10">
    <citation type="journal article" date="2011" name="RNA Biol.">
        <title>Involvement of human ELAC2 gene product in 3' end processing of mitochondrial tRNAs.</title>
        <authorList>
            <person name="Brzezniak L.K."/>
            <person name="Bijata M."/>
            <person name="Szczesny R.J."/>
            <person name="Stepien P.P."/>
        </authorList>
    </citation>
    <scope>FUNCTION</scope>
    <scope>SUBCELLULAR LOCATION</scope>
</reference>
<reference key="11">
    <citation type="journal article" date="2011" name="Sci. Signal.">
        <title>System-wide temporal characterization of the proteome and phosphoproteome of human embryonic stem cell differentiation.</title>
        <authorList>
            <person name="Rigbolt K.T."/>
            <person name="Prokhorova T.A."/>
            <person name="Akimov V."/>
            <person name="Henningsen J."/>
            <person name="Johansen P.T."/>
            <person name="Kratchmarova I."/>
            <person name="Kassem M."/>
            <person name="Mann M."/>
            <person name="Olsen J.V."/>
            <person name="Blagoev B."/>
        </authorList>
    </citation>
    <scope>IDENTIFICATION BY MASS SPECTROMETRY [LARGE SCALE ANALYSIS]</scope>
</reference>
<reference key="12">
    <citation type="journal article" date="2013" name="J. Proteome Res.">
        <title>Toward a comprehensive characterization of a human cancer cell phosphoproteome.</title>
        <authorList>
            <person name="Zhou H."/>
            <person name="Di Palma S."/>
            <person name="Preisinger C."/>
            <person name="Peng M."/>
            <person name="Polat A.N."/>
            <person name="Heck A.J."/>
            <person name="Mohammed S."/>
        </authorList>
    </citation>
    <scope>PHOSPHORYLATION [LARGE SCALE ANALYSIS] AT SER-199; SER-208; SER-229; SER-618 AND SER-736</scope>
    <scope>IDENTIFICATION BY MASS SPECTROMETRY [LARGE SCALE ANALYSIS]</scope>
    <source>
        <tissue>Cervix carcinoma</tissue>
        <tissue>Erythroleukemia</tissue>
    </source>
</reference>
<reference key="13">
    <citation type="journal article" date="2014" name="Cell Metab.">
        <title>Initial steps in RNA processing and ribosome assembly occur at mitochondrial DNA nucleoids.</title>
        <authorList>
            <person name="Bogenhagen D.F."/>
            <person name="Martin D.W."/>
            <person name="Koller A."/>
        </authorList>
    </citation>
    <scope>IDENTIFICATION BY MASS SPECTROMETRY</scope>
    <scope>SUBCELLULAR LOCATION</scope>
    <scope>FUNCTION</scope>
</reference>
<reference key="14">
    <citation type="journal article" date="2014" name="J. Proteomics">
        <title>An enzyme assisted RP-RPLC approach for in-depth analysis of human liver phosphoproteome.</title>
        <authorList>
            <person name="Bian Y."/>
            <person name="Song C."/>
            <person name="Cheng K."/>
            <person name="Dong M."/>
            <person name="Wang F."/>
            <person name="Huang J."/>
            <person name="Sun D."/>
            <person name="Wang L."/>
            <person name="Ye M."/>
            <person name="Zou H."/>
        </authorList>
    </citation>
    <scope>PHOSPHORYLATION [LARGE SCALE ANALYSIS] AT SER-208 AND SER-212</scope>
    <scope>IDENTIFICATION BY MASS SPECTROMETRY [LARGE SCALE ANALYSIS]</scope>
    <source>
        <tissue>Liver</tissue>
    </source>
</reference>
<reference key="15">
    <citation type="journal article" date="2000" name="Am. J. Hum. Genet.">
        <title>Association of HPC2/ELAC2 genotypes and prostate cancer.</title>
        <authorList>
            <person name="Rebbeck T.R."/>
            <person name="Walker A.H."/>
            <person name="Zeigler-Johnson C."/>
            <person name="Weisburg S."/>
            <person name="Martin A.-M."/>
            <person name="Nathanson K.L."/>
            <person name="Wein A.J."/>
            <person name="Malkowicz S.B."/>
        </authorList>
    </citation>
    <scope>VARIANTS HPC2 LEU-217 AND THR-541</scope>
</reference>
<reference key="16">
    <citation type="journal article" date="2001" name="Cancer Res.">
        <title>ELAC2/HPC2 involvement in hereditary and sporadic prostate cancer.</title>
        <authorList>
            <person name="Roekman A."/>
            <person name="Ikonen T."/>
            <person name="Mononen N."/>
            <person name="Autio V."/>
            <person name="Matikainen M.P."/>
            <person name="Koivisto P.A."/>
            <person name="Tammela T.L.J."/>
            <person name="Kallioniemi O.-P."/>
            <person name="Schleutker J."/>
        </authorList>
    </citation>
    <scope>VARIANT HPC2 VAL-622</scope>
</reference>
<reference key="17">
    <citation type="journal article" date="2001" name="Cancer Res.">
        <title>Role of HPC2/ELAC2 in hereditary prostate cancer.</title>
        <authorList>
            <person name="Wang L."/>
            <person name="McDonnell S.K."/>
            <person name="Elkins D.A."/>
            <person name="Slager S.L."/>
            <person name="Christensen E."/>
            <person name="Marks A.F."/>
            <person name="Cunningham J.M."/>
            <person name="Peterson B.J."/>
            <person name="Jacobsen S.J."/>
            <person name="Cerhan J.R."/>
            <person name="Blute M.L."/>
            <person name="Schaid D.J."/>
            <person name="Thibodeau S.N."/>
        </authorList>
    </citation>
    <scope>VARIANTS HPC2 GLN-211; LEU-217; ARG-487; THR-541 AND ARG-806</scope>
</reference>
<reference key="18">
    <citation type="journal article" date="2002" name="J. Hum. Genet.">
        <title>Association of common missense changes in ELAC2 (HPC2) with prostate cancer in a Japanese case-control series.</title>
        <authorList>
            <person name="Fujiwara H."/>
            <person name="Emi M."/>
            <person name="Nagai H."/>
            <person name="Nishimura T."/>
            <person name="Konishi N."/>
            <person name="Kubota Y."/>
            <person name="Ichikawa T."/>
            <person name="Takahashi S."/>
            <person name="Shuin T."/>
            <person name="Habuchi T."/>
            <person name="Ogawa O."/>
            <person name="Inoue K."/>
            <person name="Skolnick M.H."/>
            <person name="Swensen J."/>
            <person name="Camp N.J."/>
            <person name="Tavtigian S.V."/>
        </authorList>
    </citation>
    <scope>VARIANTS HPC2 LEU-217 AND THR-541</scope>
</reference>
<reference key="19">
    <citation type="journal article" date="2002" name="Am. J. Hum. Genet.">
        <title>Meta-analysis of associations of the Ser217Leu and Ala541Thr variants in ELAC2 (HPC2) and prostate cancer.</title>
        <authorList>
            <person name="Camp N.J."/>
            <person name="Tavtigian S.V."/>
        </authorList>
    </citation>
    <scope>VARIANTS HPC2 LEU-217 AND THR-541</scope>
</reference>
<reference key="20">
    <citation type="journal article" date="2003" name="Int. J. Cancer">
        <title>Ser217Leu polymorphism of the HPC2/ELAC2 gene associated with prostatic cancer risk in Japanese men.</title>
        <authorList>
            <person name="Takahashi H."/>
            <person name="Lu W."/>
            <person name="Watanabe M."/>
            <person name="Katoh T."/>
            <person name="Furusato M."/>
            <person name="Tsukino H."/>
            <person name="Nakao H."/>
            <person name="Sudo A."/>
            <person name="Suzuki H."/>
            <person name="Akakura K."/>
            <person name="Ikemoto I."/>
            <person name="Asano K."/>
            <person name="Ito T."/>
            <person name="Wakui S."/>
            <person name="Muto T."/>
            <person name="Hano H."/>
        </authorList>
    </citation>
    <scope>VARIANT LEU-627</scope>
</reference>
<reference key="21">
    <citation type="journal article" date="2003" name="J. Natl. Cancer Inst.">
        <title>ELAC2/HPC2 polymorphisms, prostate-specific antigen levels, and prostate cancer.</title>
        <authorList>
            <person name="Severi G."/>
            <person name="Giles G.G."/>
            <person name="Southey M.C."/>
            <person name="Tesoriero A."/>
            <person name="Tilley W."/>
            <person name="Neufing P."/>
            <person name="Morris H."/>
            <person name="English D.R."/>
            <person name="McCredie M.R."/>
            <person name="Boyle P."/>
            <person name="Hopper J.L."/>
        </authorList>
    </citation>
    <scope>VARIANTS HPC2 LEU-217 AND THR-541</scope>
</reference>
<reference key="22">
    <citation type="journal article" date="2008" name="Nature">
        <title>DNA sequencing of a cytogenetically normal acute myeloid leukaemia genome.</title>
        <authorList>
            <person name="Ley T.J."/>
            <person name="Mardis E.R."/>
            <person name="Ding L."/>
            <person name="Fulton B."/>
            <person name="McLellan M.D."/>
            <person name="Chen K."/>
            <person name="Dooling D."/>
            <person name="Dunford-Shore B.H."/>
            <person name="McGrath S."/>
            <person name="Hickenbotham M."/>
            <person name="Cook L."/>
            <person name="Abbott R."/>
            <person name="Larson D.E."/>
            <person name="Koboldt D.C."/>
            <person name="Pohl C."/>
            <person name="Smith S."/>
            <person name="Hawkins A."/>
            <person name="Abbott S."/>
            <person name="Locke D."/>
            <person name="Hillier L.W."/>
            <person name="Miner T."/>
            <person name="Fulton L."/>
            <person name="Magrini V."/>
            <person name="Wylie T."/>
            <person name="Glasscock J."/>
            <person name="Conyers J."/>
            <person name="Sander N."/>
            <person name="Shi X."/>
            <person name="Osborne J.R."/>
            <person name="Minx P."/>
            <person name="Gordon D."/>
            <person name="Chinwalla A."/>
            <person name="Zhao Y."/>
            <person name="Ries R.E."/>
            <person name="Payton J.E."/>
            <person name="Westervelt P."/>
            <person name="Tomasson M.H."/>
            <person name="Watson M."/>
            <person name="Baty J."/>
            <person name="Ivanovich J."/>
            <person name="Heath S."/>
            <person name="Shannon W.D."/>
            <person name="Nagarajan R."/>
            <person name="Walter M.J."/>
            <person name="Link D.C."/>
            <person name="Graubert T.A."/>
            <person name="DiPersio J.F."/>
            <person name="Wilson R.K."/>
        </authorList>
    </citation>
    <scope>VARIANT [LARGE SCALE ANALYSIS] HPC2 LEU-217</scope>
</reference>
<reference key="23">
    <citation type="journal article" date="2013" name="Am. J. Hum. Genet.">
        <title>ELAC2 mutations cause a mitochondrial RNA processing defect associated with hypertrophic cardiomyopathy.</title>
        <authorList>
            <person name="Haack T.B."/>
            <person name="Kopajtich R."/>
            <person name="Freisinger P."/>
            <person name="Wieland T."/>
            <person name="Rorbach J."/>
            <person name="Nicholls T.J."/>
            <person name="Baruffini E."/>
            <person name="Walther A."/>
            <person name="Danhauser K."/>
            <person name="Zimmermann F.A."/>
            <person name="Husain R.A."/>
            <person name="Schum J."/>
            <person name="Mundy H."/>
            <person name="Ferrero I."/>
            <person name="Strom T.M."/>
            <person name="Meitinger T."/>
            <person name="Taylor R.W."/>
            <person name="Minczuk M."/>
            <person name="Mayr J.A."/>
            <person name="Prokisch H."/>
        </authorList>
    </citation>
    <scope>VARIANTS COXPD17 LEU-154; PHE-423 AND ILE-520</scope>
</reference>
<sequence>MWALCSLLRSAAGRTMSQGRTISQAPARRERPRKDPLRHLRTREKRGPSGCSGGPNTVYLQVVAAGSRDSGAALYVFSEFNRYLFNCGEGVQRLMQEHKLKVARLDNIFLTRMHWSNVGGLSGMILTLKETGLPKCVLSGPPQLEKYLEAIKIFSGPLKGIELAVRPHSAPEYEDETMTVYQIPIHSEQRRGKHQPWQSPERPLSRLSPERSSDSESNENEPHLPHGVSQRRGVRDSSLVVAFICKLHLKRGNFLVLKAKEMGLPVGTAAIAPIIAAVKDGKSITHEGREILAEELCTPPDPGAAFVVVECPDESFIQPICENATFQRYQGKADAPVALVVHMAPASVLVDSRYQQWMERFGPDTQHLVLNENCASVHNLRSHKIQTQLNLIHPDIFPLLTSFRCKKEGPTLSVPMVQGECLLKYQLRPRREWQRDAIITCNPEEFIVEALQLPNFQQSVQEYRRSAQDGPAPAEKRSQYPEIIFLGTGSAIPMKIRNVSATLVNISPDTSLLLDCGEGTFGQLCRHYGDQVDRVLGTLAAVFVSHLHADHHTGLPSILLQRERALASLGKPLHPLLVVAPNQLKAWLQQYHNQCQEVLHHISMIPAKCLQEGAEISSPAVERLISSLLRTCDLEEFQTCLVRHCKHAFGCALVHTSGWKVVYSGDTMPCEALVRMGKDATLLIHEATLEDGLEEEAVEKTHSTTSQAISVGMRMNAEFIMLNHFSQRYAKVPLFSPNFSEKVGVAFDHMKVCFGDFPTMPKLIPPLKALFAGDIEEMEERREKRELRQVRAALLSRELAGGLEDGEPQQKRAHTEEPQAKKVRAQ</sequence>
<name>RNZ2_HUMAN</name>
<dbReference type="EC" id="3.1.26.11"/>
<dbReference type="EMBL" id="AF304369">
    <property type="protein sequence ID" value="AAG24440.1"/>
    <property type="molecule type" value="Genomic_DNA"/>
</dbReference>
<dbReference type="EMBL" id="AF304370">
    <property type="protein sequence ID" value="AAG24441.1"/>
    <property type="molecule type" value="mRNA"/>
</dbReference>
<dbReference type="EMBL" id="AK001392">
    <property type="status" value="NOT_ANNOTATED_CDS"/>
    <property type="molecule type" value="mRNA"/>
</dbReference>
<dbReference type="EMBL" id="AK124838">
    <property type="protein sequence ID" value="BAC85964.1"/>
    <property type="molecule type" value="mRNA"/>
</dbReference>
<dbReference type="EMBL" id="AK125030">
    <property type="protein sequence ID" value="BAC86026.1"/>
    <property type="molecule type" value="mRNA"/>
</dbReference>
<dbReference type="EMBL" id="AK298397">
    <property type="protein sequence ID" value="BAG60631.1"/>
    <property type="molecule type" value="mRNA"/>
</dbReference>
<dbReference type="EMBL" id="CR457261">
    <property type="protein sequence ID" value="CAG33542.1"/>
    <property type="molecule type" value="mRNA"/>
</dbReference>
<dbReference type="EMBL" id="AC005277">
    <property type="status" value="NOT_ANNOTATED_CDS"/>
    <property type="molecule type" value="Genomic_DNA"/>
</dbReference>
<dbReference type="EMBL" id="BC001939">
    <property type="protein sequence ID" value="AAH01939.1"/>
    <property type="molecule type" value="mRNA"/>
</dbReference>
<dbReference type="EMBL" id="BC004158">
    <property type="protein sequence ID" value="AAH04158.1"/>
    <property type="molecule type" value="mRNA"/>
</dbReference>
<dbReference type="CCDS" id="CCDS11164.1">
    <molecule id="Q9BQ52-1"/>
</dbReference>
<dbReference type="CCDS" id="CCDS54093.1">
    <molecule id="Q9BQ52-4"/>
</dbReference>
<dbReference type="RefSeq" id="NP_001159434.1">
    <molecule id="Q9BQ52-4"/>
    <property type="nucleotide sequence ID" value="NM_001165962.2"/>
</dbReference>
<dbReference type="RefSeq" id="NP_060597.4">
    <molecule id="Q9BQ52-1"/>
    <property type="nucleotide sequence ID" value="NM_018127.6"/>
</dbReference>
<dbReference type="RefSeq" id="NP_776065.1">
    <property type="nucleotide sequence ID" value="NM_173717.1"/>
</dbReference>
<dbReference type="PDB" id="8CBL">
    <property type="method" value="EM"/>
    <property type="resolution" value="2.79 A"/>
    <property type="chains" value="E=1-826"/>
</dbReference>
<dbReference type="PDB" id="8RR1">
    <property type="method" value="EM"/>
    <property type="resolution" value="2.93 A"/>
    <property type="chains" value="E=32-826"/>
</dbReference>
<dbReference type="PDB" id="8RR3">
    <property type="method" value="EM"/>
    <property type="resolution" value="3.40 A"/>
    <property type="chains" value="E=32-826"/>
</dbReference>
<dbReference type="PDB" id="8RR4">
    <property type="method" value="EM"/>
    <property type="resolution" value="3.20 A"/>
    <property type="chains" value="E=32-826"/>
</dbReference>
<dbReference type="PDB" id="8Z0P">
    <property type="method" value="EM"/>
    <property type="resolution" value="3.10 A"/>
    <property type="chains" value="A=1-826"/>
</dbReference>
<dbReference type="PDB" id="8Z1F">
    <property type="method" value="EM"/>
    <property type="resolution" value="4.30 A"/>
    <property type="chains" value="A=1-826"/>
</dbReference>
<dbReference type="PDB" id="8Z1G">
    <property type="method" value="EM"/>
    <property type="resolution" value="3.70 A"/>
    <property type="chains" value="A=1-826"/>
</dbReference>
<dbReference type="PDB" id="9EY0">
    <property type="method" value="EM"/>
    <property type="resolution" value="2.78 A"/>
    <property type="chains" value="E=31-826"/>
</dbReference>
<dbReference type="PDB" id="9EY1">
    <property type="method" value="EM"/>
    <property type="resolution" value="2.90 A"/>
    <property type="chains" value="E=31-826"/>
</dbReference>
<dbReference type="PDB" id="9EY2">
    <property type="method" value="EM"/>
    <property type="resolution" value="2.96 A"/>
    <property type="chains" value="E=31-826"/>
</dbReference>
<dbReference type="PDBsum" id="8CBL"/>
<dbReference type="PDBsum" id="8RR1"/>
<dbReference type="PDBsum" id="8RR3"/>
<dbReference type="PDBsum" id="8RR4"/>
<dbReference type="PDBsum" id="8Z0P"/>
<dbReference type="PDBsum" id="8Z1F"/>
<dbReference type="PDBsum" id="8Z1G"/>
<dbReference type="PDBsum" id="9EY0"/>
<dbReference type="PDBsum" id="9EY1"/>
<dbReference type="PDBsum" id="9EY2"/>
<dbReference type="EMDB" id="EMD-16544"/>
<dbReference type="EMDB" id="EMD-19453"/>
<dbReference type="EMDB" id="EMD-19455"/>
<dbReference type="EMDB" id="EMD-19457"/>
<dbReference type="EMDB" id="EMD-39710"/>
<dbReference type="EMDB" id="EMD-39726"/>
<dbReference type="EMDB" id="EMD-39727"/>
<dbReference type="EMDB" id="EMD-50050"/>
<dbReference type="EMDB" id="EMD-50051"/>
<dbReference type="EMDB" id="EMD-50052"/>
<dbReference type="SMR" id="Q9BQ52"/>
<dbReference type="BioGRID" id="121937">
    <property type="interactions" value="196"/>
</dbReference>
<dbReference type="ComplexPortal" id="CPX-2240">
    <property type="entry name" value="Mitochondrial RNase Z complex"/>
</dbReference>
<dbReference type="FunCoup" id="Q9BQ52">
    <property type="interactions" value="3637"/>
</dbReference>
<dbReference type="IntAct" id="Q9BQ52">
    <property type="interactions" value="47"/>
</dbReference>
<dbReference type="MINT" id="Q9BQ52"/>
<dbReference type="STRING" id="9606.ENSP00000337445"/>
<dbReference type="GlyGen" id="Q9BQ52">
    <property type="glycosylation" value="1 site, 1 O-linked glycan (1 site)"/>
</dbReference>
<dbReference type="iPTMnet" id="Q9BQ52"/>
<dbReference type="MetOSite" id="Q9BQ52"/>
<dbReference type="PhosphoSitePlus" id="Q9BQ52"/>
<dbReference type="SwissPalm" id="Q9BQ52"/>
<dbReference type="BioMuta" id="ELAC2"/>
<dbReference type="DMDM" id="41017788"/>
<dbReference type="jPOST" id="Q9BQ52"/>
<dbReference type="MassIVE" id="Q9BQ52"/>
<dbReference type="PaxDb" id="9606-ENSP00000337445"/>
<dbReference type="PeptideAtlas" id="Q9BQ52"/>
<dbReference type="ProteomicsDB" id="78627">
    <molecule id="Q9BQ52-1"/>
</dbReference>
<dbReference type="ProteomicsDB" id="78628">
    <molecule id="Q9BQ52-2"/>
</dbReference>
<dbReference type="ProteomicsDB" id="78629">
    <molecule id="Q9BQ52-3"/>
</dbReference>
<dbReference type="ProteomicsDB" id="78630">
    <molecule id="Q9BQ52-4"/>
</dbReference>
<dbReference type="Pumba" id="Q9BQ52"/>
<dbReference type="Antibodypedia" id="13065">
    <property type="antibodies" value="203 antibodies from 30 providers"/>
</dbReference>
<dbReference type="DNASU" id="60528"/>
<dbReference type="Ensembl" id="ENST00000338034.9">
    <molecule id="Q9BQ52-1"/>
    <property type="protein sequence ID" value="ENSP00000337445.4"/>
    <property type="gene ID" value="ENSG00000006744.19"/>
</dbReference>
<dbReference type="Ensembl" id="ENST00000426905.7">
    <molecule id="Q9BQ52-4"/>
    <property type="protein sequence ID" value="ENSP00000405223.3"/>
    <property type="gene ID" value="ENSG00000006744.19"/>
</dbReference>
<dbReference type="GeneID" id="60528"/>
<dbReference type="KEGG" id="hsa:60528"/>
<dbReference type="MANE-Select" id="ENST00000338034.9">
    <property type="protein sequence ID" value="ENSP00000337445.4"/>
    <property type="RefSeq nucleotide sequence ID" value="NM_018127.7"/>
    <property type="RefSeq protein sequence ID" value="NP_060597.4"/>
</dbReference>
<dbReference type="UCSC" id="uc002gnz.5">
    <molecule id="Q9BQ52-1"/>
    <property type="organism name" value="human"/>
</dbReference>
<dbReference type="AGR" id="HGNC:14198"/>
<dbReference type="CTD" id="60528"/>
<dbReference type="DisGeNET" id="60528"/>
<dbReference type="GeneCards" id="ELAC2"/>
<dbReference type="HGNC" id="HGNC:14198">
    <property type="gene designation" value="ELAC2"/>
</dbReference>
<dbReference type="HPA" id="ENSG00000006744">
    <property type="expression patterns" value="Low tissue specificity"/>
</dbReference>
<dbReference type="MalaCards" id="ELAC2"/>
<dbReference type="MIM" id="176807">
    <property type="type" value="phenotype"/>
</dbReference>
<dbReference type="MIM" id="605367">
    <property type="type" value="gene"/>
</dbReference>
<dbReference type="MIM" id="614731">
    <property type="type" value="phenotype"/>
</dbReference>
<dbReference type="MIM" id="615440">
    <property type="type" value="phenotype"/>
</dbReference>
<dbReference type="neXtProt" id="NX_Q9BQ52"/>
<dbReference type="OpenTargets" id="ENSG00000006744"/>
<dbReference type="Orphanet" id="369913">
    <property type="disease" value="Combined oxidative phosphorylation defect type 17"/>
</dbReference>
<dbReference type="Orphanet" id="1331">
    <property type="disease" value="Familial prostate cancer"/>
</dbReference>
<dbReference type="PharmGKB" id="PA27739"/>
<dbReference type="VEuPathDB" id="HostDB:ENSG00000006744"/>
<dbReference type="eggNOG" id="KOG2121">
    <property type="taxonomic scope" value="Eukaryota"/>
</dbReference>
<dbReference type="GeneTree" id="ENSGT00730000111191"/>
<dbReference type="HOGENOM" id="CLU_006220_2_0_1"/>
<dbReference type="InParanoid" id="Q9BQ52"/>
<dbReference type="OMA" id="INYICQL"/>
<dbReference type="OrthoDB" id="527344at2759"/>
<dbReference type="PAN-GO" id="Q9BQ52">
    <property type="GO annotations" value="3 GO annotations based on evolutionary models"/>
</dbReference>
<dbReference type="PhylomeDB" id="Q9BQ52"/>
<dbReference type="TreeFam" id="TF105797"/>
<dbReference type="BRENDA" id="3.1.26.11">
    <property type="organism ID" value="2681"/>
</dbReference>
<dbReference type="PathwayCommons" id="Q9BQ52"/>
<dbReference type="Reactome" id="R-HSA-6784531">
    <property type="pathway name" value="tRNA processing in the nucleus"/>
</dbReference>
<dbReference type="Reactome" id="R-HSA-6785470">
    <property type="pathway name" value="tRNA processing in the mitochondrion"/>
</dbReference>
<dbReference type="Reactome" id="R-HSA-8868766">
    <property type="pathway name" value="rRNA processing in the mitochondrion"/>
</dbReference>
<dbReference type="Reactome" id="R-HSA-9708296">
    <property type="pathway name" value="tRNA-derived small RNA (tsRNA or tRNA-related fragment, tRF) biogenesis"/>
</dbReference>
<dbReference type="SignaLink" id="Q9BQ52"/>
<dbReference type="BioGRID-ORCS" id="60528">
    <property type="hits" value="738 hits in 1175 CRISPR screens"/>
</dbReference>
<dbReference type="CD-CODE" id="F701F3BC">
    <property type="entry name" value="PcG body"/>
</dbReference>
<dbReference type="ChiTaRS" id="ELAC2">
    <property type="organism name" value="human"/>
</dbReference>
<dbReference type="GeneWiki" id="ELAC2"/>
<dbReference type="GenomeRNAi" id="60528"/>
<dbReference type="Pharos" id="Q9BQ52">
    <property type="development level" value="Tbio"/>
</dbReference>
<dbReference type="PRO" id="PR:Q9BQ52"/>
<dbReference type="Proteomes" id="UP000005640">
    <property type="component" value="Chromosome 17"/>
</dbReference>
<dbReference type="RNAct" id="Q9BQ52">
    <property type="molecule type" value="protein"/>
</dbReference>
<dbReference type="Bgee" id="ENSG00000006744">
    <property type="expression patterns" value="Expressed in adrenal tissue and 202 other cell types or tissues"/>
</dbReference>
<dbReference type="ExpressionAtlas" id="Q9BQ52">
    <property type="expression patterns" value="baseline and differential"/>
</dbReference>
<dbReference type="GO" id="GO:0005829">
    <property type="term" value="C:cytosol"/>
    <property type="evidence" value="ECO:0000304"/>
    <property type="project" value="Reactome"/>
</dbReference>
<dbReference type="GO" id="GO:0005759">
    <property type="term" value="C:mitochondrial matrix"/>
    <property type="evidence" value="ECO:0000304"/>
    <property type="project" value="Reactome"/>
</dbReference>
<dbReference type="GO" id="GO:0042645">
    <property type="term" value="C:mitochondrial nucleoid"/>
    <property type="evidence" value="ECO:0000314"/>
    <property type="project" value="UniProtKB"/>
</dbReference>
<dbReference type="GO" id="GO:0005739">
    <property type="term" value="C:mitochondrion"/>
    <property type="evidence" value="ECO:0000314"/>
    <property type="project" value="UniProtKB"/>
</dbReference>
<dbReference type="GO" id="GO:0005654">
    <property type="term" value="C:nucleoplasm"/>
    <property type="evidence" value="ECO:0000314"/>
    <property type="project" value="HPA"/>
</dbReference>
<dbReference type="GO" id="GO:0005634">
    <property type="term" value="C:nucleus"/>
    <property type="evidence" value="ECO:0000314"/>
    <property type="project" value="UniProtKB"/>
</dbReference>
<dbReference type="GO" id="GO:0042781">
    <property type="term" value="F:3'-tRNA processing endoribonuclease activity"/>
    <property type="evidence" value="ECO:0000318"/>
    <property type="project" value="GO_Central"/>
</dbReference>
<dbReference type="GO" id="GO:0046872">
    <property type="term" value="F:metal ion binding"/>
    <property type="evidence" value="ECO:0007669"/>
    <property type="project" value="UniProtKB-KW"/>
</dbReference>
<dbReference type="GO" id="GO:0003723">
    <property type="term" value="F:RNA binding"/>
    <property type="evidence" value="ECO:0007005"/>
    <property type="project" value="UniProtKB"/>
</dbReference>
<dbReference type="GO" id="GO:0004521">
    <property type="term" value="F:RNA endonuclease activity"/>
    <property type="evidence" value="ECO:0000304"/>
    <property type="project" value="Reactome"/>
</dbReference>
<dbReference type="GO" id="GO:0004549">
    <property type="term" value="F:tRNA-specific ribonuclease activity"/>
    <property type="evidence" value="ECO:0000269"/>
    <property type="project" value="Reactome"/>
</dbReference>
<dbReference type="GO" id="GO:1990180">
    <property type="term" value="P:mitochondrial tRNA 3'-end processing"/>
    <property type="evidence" value="ECO:0000315"/>
    <property type="project" value="UniProtKB"/>
</dbReference>
<dbReference type="GO" id="GO:0090646">
    <property type="term" value="P:mitochondrial tRNA processing"/>
    <property type="evidence" value="ECO:0000304"/>
    <property type="project" value="Reactome"/>
</dbReference>
<dbReference type="GO" id="GO:0042780">
    <property type="term" value="P:tRNA 3'-end processing"/>
    <property type="evidence" value="ECO:0000304"/>
    <property type="project" value="Reactome"/>
</dbReference>
<dbReference type="GO" id="GO:0016078">
    <property type="term" value="P:tRNA decay"/>
    <property type="evidence" value="ECO:0000304"/>
    <property type="project" value="Reactome"/>
</dbReference>
<dbReference type="CDD" id="cd07718">
    <property type="entry name" value="RNaseZ_ELAC1_ELAC2-C-term-like_MBL-fold"/>
    <property type="match status" value="1"/>
</dbReference>
<dbReference type="CDD" id="cd16296">
    <property type="entry name" value="RNaseZ_ELAC2-N-term-like_MBL-fold"/>
    <property type="match status" value="1"/>
</dbReference>
<dbReference type="FunFam" id="3.60.15.10:FF:000014">
    <property type="entry name" value="Zinc phosphodiesterase ELAC protein 2"/>
    <property type="match status" value="1"/>
</dbReference>
<dbReference type="Gene3D" id="3.60.15.10">
    <property type="entry name" value="Ribonuclease Z/Hydroxyacylglutathione hydrolase-like"/>
    <property type="match status" value="2"/>
</dbReference>
<dbReference type="InterPro" id="IPR001279">
    <property type="entry name" value="Metallo-B-lactamas"/>
</dbReference>
<dbReference type="InterPro" id="IPR036866">
    <property type="entry name" value="RibonucZ/Hydroxyglut_hydro"/>
</dbReference>
<dbReference type="InterPro" id="IPR047151">
    <property type="entry name" value="RNZ2-like"/>
</dbReference>
<dbReference type="InterPro" id="IPR027794">
    <property type="entry name" value="tRNase_Z_dom"/>
</dbReference>
<dbReference type="PANTHER" id="PTHR12553">
    <property type="entry name" value="ZINC PHOSPHODIESTERASE ELAC PROTEIN 2"/>
    <property type="match status" value="1"/>
</dbReference>
<dbReference type="PANTHER" id="PTHR12553:SF49">
    <property type="entry name" value="ZINC PHOSPHODIESTERASE ELAC PROTEIN 2"/>
    <property type="match status" value="1"/>
</dbReference>
<dbReference type="Pfam" id="PF12706">
    <property type="entry name" value="Lactamase_B_2"/>
    <property type="match status" value="1"/>
</dbReference>
<dbReference type="Pfam" id="PF13691">
    <property type="entry name" value="Lactamase_B_4"/>
    <property type="match status" value="1"/>
</dbReference>
<dbReference type="SUPFAM" id="SSF56281">
    <property type="entry name" value="Metallo-hydrolase/oxidoreductase"/>
    <property type="match status" value="2"/>
</dbReference>
<keyword id="KW-0002">3D-structure</keyword>
<keyword id="KW-0025">Alternative splicing</keyword>
<keyword id="KW-0225">Disease variant</keyword>
<keyword id="KW-0255">Endonuclease</keyword>
<keyword id="KW-0378">Hydrolase</keyword>
<keyword id="KW-0479">Metal-binding</keyword>
<keyword id="KW-0496">Mitochondrion</keyword>
<keyword id="KW-1135">Mitochondrion nucleoid</keyword>
<keyword id="KW-0540">Nuclease</keyword>
<keyword id="KW-0539">Nucleus</keyword>
<keyword id="KW-0597">Phosphoprotein</keyword>
<keyword id="KW-1274">Primary mitochondrial disease</keyword>
<keyword id="KW-1267">Proteomics identification</keyword>
<keyword id="KW-0656">Proto-oncogene</keyword>
<keyword id="KW-1185">Reference proteome</keyword>
<keyword id="KW-0809">Transit peptide</keyword>
<keyword id="KW-0819">tRNA processing</keyword>
<keyword id="KW-0862">Zinc</keyword>
<accession>Q9BQ52</accession>
<accession>B4DPL9</accession>
<accession>Q6IA94</accession>
<accession>Q9HAS8</accession>
<accession>Q9HAS9</accession>
<accession>Q9NVT1</accession>
<protein>
    <recommendedName>
        <fullName>Zinc phosphodiesterase ELAC protein 2</fullName>
        <ecNumber>3.1.26.11</ecNumber>
    </recommendedName>
    <alternativeName>
        <fullName>ElaC homolog protein 2</fullName>
    </alternativeName>
    <alternativeName>
        <fullName>Heredity prostate cancer protein 2</fullName>
    </alternativeName>
    <alternativeName>
        <fullName>Ribonuclease Z 2</fullName>
        <shortName>RNase Z 2</shortName>
    </alternativeName>
    <alternativeName>
        <fullName>tRNA 3 endonuclease 2</fullName>
    </alternativeName>
    <alternativeName>
        <fullName>tRNase Z 2</fullName>
    </alternativeName>
</protein>
<comment type="function">
    <text evidence="15 18">Zinc phosphodiesterase, which displays mitochondrial tRNA 3'-processing endonuclease activity. Involved in tRNA maturation, by removing a 3'-trailer from precursor tRNA (PubMed:21593607). Associates with mitochondrial DNA complexes at the nucleoids to initiate RNA processing and ribosome assembly (PubMed:24703694).</text>
</comment>
<comment type="catalytic activity">
    <reaction evidence="10">
        <text>Endonucleolytic cleavage of RNA, removing extra 3' nucleotides from tRNA precursor, generating 3' termini of tRNAs. A 3'-hydroxy group is left at the tRNA terminus and a 5'-phosphoryl group is left at the trailer molecule.</text>
        <dbReference type="EC" id="3.1.26.11"/>
    </reaction>
</comment>
<comment type="cofactor">
    <cofactor evidence="21">
        <name>Zn(2+)</name>
        <dbReference type="ChEBI" id="CHEBI:29105"/>
    </cofactor>
</comment>
<comment type="subunit">
    <text evidence="1 16">Homodimer (By similarity). Interacts with PTCD1.</text>
</comment>
<comment type="subcellular location">
    <subcellularLocation>
        <location evidence="15">Mitochondrion</location>
    </subcellularLocation>
    <subcellularLocation>
        <location evidence="18">Mitochondrion matrix</location>
        <location evidence="18">Mitochondrion nucleoid</location>
    </subcellularLocation>
    <subcellularLocation>
        <location evidence="15">Nucleus</location>
    </subcellularLocation>
    <text>Mainly mitochondrial.</text>
</comment>
<comment type="alternative products">
    <event type="alternative splicing"/>
    <isoform>
        <id>Q9BQ52-1</id>
        <name>1</name>
        <sequence type="displayed"/>
    </isoform>
    <isoform>
        <id>Q9BQ52-2</id>
        <name>2</name>
        <sequence type="described" ref="VSP_009169 VSP_009171 VSP_009172"/>
    </isoform>
    <isoform>
        <id>Q9BQ52-3</id>
        <name>3</name>
        <sequence type="described" ref="VSP_009168 VSP_009170"/>
    </isoform>
    <isoform>
        <id>Q9BQ52-4</id>
        <name>4</name>
        <sequence type="described" ref="VSP_043449"/>
    </isoform>
</comment>
<comment type="tissue specificity">
    <text evidence="5">Widely expressed. Highly expressed in heart, placenta, liver, skeletal muscle, kidney, pancreas, testis and ovary. Weakly expressed in brain, lung, spleen, thymus, prostate, small intestine, colon and leukocytes.</text>
</comment>
<comment type="disease" evidence="4 5 6 7 8 9 10 11 13 14 19">
    <disease id="DI-03498">
        <name>Prostate cancer, hereditary, 2</name>
        <acronym>HPC2</acronym>
        <description>A condition associated with familial predisposition to cancer of the prostate. Most prostate cancers are adenocarcinomas that develop in the acini of the prostatic ducts. Other rare histopathologic types of prostate cancer that occur in approximately 5% of patients include small cell carcinoma, mucinous carcinoma, prostatic ductal carcinoma, transitional cell carcinoma, squamous cell carcinoma, basal cell carcinoma, adenoid cystic carcinoma (basaloid), signet-ring cell carcinoma and neuroendocrine carcinoma.</description>
        <dbReference type="MIM" id="614731"/>
    </disease>
    <text>The disease is caused by variants affecting the gene represented in this entry.</text>
</comment>
<comment type="disease" evidence="17">
    <disease id="DI-03913">
        <name>Combined oxidative phosphorylation deficiency 17</name>
        <acronym>COXPD17</acronym>
        <description>An autosomal recessive disorder of mitochondrial dysfunction characterized by onset of severe hypertrophic cardiomyopathy in the first year of life. Other features include hypotonia, poor growth, lactic acidosis, and failure to thrive. The disorder may be fatal in early childhood.</description>
        <dbReference type="MIM" id="615440"/>
    </disease>
    <text>The disease is caused by variants affecting the gene represented in this entry.</text>
</comment>
<comment type="similarity">
    <text evidence="21">Belongs to the RNase Z family.</text>
</comment>
<comment type="online information" name="Atlas of Genetics and Cytogenetics in Oncology and Haematology">
    <link uri="https://atlasgeneticsoncology.org/gene/40437/ELAC2"/>
</comment>
<proteinExistence type="evidence at protein level"/>
<organism>
    <name type="scientific">Homo sapiens</name>
    <name type="common">Human</name>
    <dbReference type="NCBI Taxonomy" id="9606"/>
    <lineage>
        <taxon>Eukaryota</taxon>
        <taxon>Metazoa</taxon>
        <taxon>Chordata</taxon>
        <taxon>Craniata</taxon>
        <taxon>Vertebrata</taxon>
        <taxon>Euteleostomi</taxon>
        <taxon>Mammalia</taxon>
        <taxon>Eutheria</taxon>
        <taxon>Euarchontoglires</taxon>
        <taxon>Primates</taxon>
        <taxon>Haplorrhini</taxon>
        <taxon>Catarrhini</taxon>
        <taxon>Hominidae</taxon>
        <taxon>Homo</taxon>
    </lineage>
</organism>
<feature type="transit peptide" description="Mitochondrion" evidence="2">
    <location>
        <begin position="1"/>
        <end position="16"/>
    </location>
</feature>
<feature type="chain" id="PRO_0000155828" description="Zinc phosphodiesterase ELAC protein 2">
    <location>
        <begin position="17"/>
        <end position="826"/>
    </location>
</feature>
<feature type="region of interest" description="Disordered" evidence="3">
    <location>
        <begin position="16"/>
        <end position="51"/>
    </location>
</feature>
<feature type="region of interest" description="Disordered" evidence="3">
    <location>
        <begin position="188"/>
        <end position="231"/>
    </location>
</feature>
<feature type="region of interest" description="Disordered" evidence="3">
    <location>
        <begin position="798"/>
        <end position="826"/>
    </location>
</feature>
<feature type="compositionally biased region" description="Basic and acidic residues" evidence="3">
    <location>
        <begin position="27"/>
        <end position="38"/>
    </location>
</feature>
<feature type="compositionally biased region" description="Basic and acidic residues" evidence="3">
    <location>
        <begin position="208"/>
        <end position="224"/>
    </location>
</feature>
<feature type="compositionally biased region" description="Basic and acidic residues" evidence="3">
    <location>
        <begin position="808"/>
        <end position="820"/>
    </location>
</feature>
<feature type="modified residue" description="Phosphoserine" evidence="22 23">
    <location>
        <position position="199"/>
    </location>
</feature>
<feature type="modified residue" description="Phosphoserine" evidence="23 24">
    <location>
        <position position="208"/>
    </location>
</feature>
<feature type="modified residue" description="Phosphoserine" evidence="24">
    <location>
        <position position="212"/>
    </location>
</feature>
<feature type="modified residue" description="Phosphoserine" evidence="23">
    <location>
        <position position="229"/>
    </location>
</feature>
<feature type="modified residue" description="Phosphoserine" evidence="23">
    <location>
        <position position="618"/>
    </location>
</feature>
<feature type="modified residue" description="Phosphoserine" evidence="23">
    <location>
        <position position="736"/>
    </location>
</feature>
<feature type="splice variant" id="VSP_009168" description="In isoform 3." evidence="20">
    <location>
        <begin position="1"/>
        <end position="372"/>
    </location>
</feature>
<feature type="splice variant" id="VSP_009169" description="In isoform 2." evidence="20">
    <location>
        <begin position="1"/>
        <end position="94"/>
    </location>
</feature>
<feature type="splice variant" id="VSP_043449" description="In isoform 4." evidence="20">
    <location>
        <begin position="188"/>
        <end position="227"/>
    </location>
</feature>
<feature type="splice variant" id="VSP_009170" description="In isoform 3." evidence="20">
    <original>NCASVHNLRSHKIQTQLNLIHPDIFPLLTSFRCK</original>
    <variation>MRTVPQFTTFAATRFKPSSTSSTRTSSPCSPVSA</variation>
    <location>
        <begin position="373"/>
        <end position="406"/>
    </location>
</feature>
<feature type="splice variant" id="VSP_009171" description="In isoform 2." evidence="20">
    <original>GLPSILLQRERALASLGKPLHPLLVVAPNQLKAWLQQYHNQC</original>
    <variation>VSVGLDHKAGAWRRHCHVELALWLRLFLRFQTCPELLLLISG</variation>
    <location>
        <begin position="554"/>
        <end position="595"/>
    </location>
</feature>
<feature type="splice variant" id="VSP_009172" description="In isoform 2." evidence="20">
    <location>
        <begin position="596"/>
        <end position="826"/>
    </location>
</feature>
<feature type="sequence variant" id="VAR_038210" description="In dbSNP:rs9895963.">
    <original>S</original>
    <variation>F</variation>
    <location>
        <position position="52"/>
    </location>
</feature>
<feature type="sequence variant" id="VAR_070844" description="In COXPD17; dbSNP:rs397515465." evidence="17">
    <original>F</original>
    <variation>L</variation>
    <location>
        <position position="154"/>
    </location>
</feature>
<feature type="sequence variant" id="VAR_017425" description="In HPC2; dbSNP:rs148419785." evidence="7">
    <original>R</original>
    <variation>Q</variation>
    <location>
        <position position="211"/>
    </location>
</feature>
<feature type="sequence variant" id="VAR_017426" description="In HPC2; risk factor for disease development; does not affect the enzymatic activity; dbSNP:rs4792311." evidence="4 5 7 8 9 10 11 13 14 19">
    <original>S</original>
    <variation>L</variation>
    <location>
        <position position="217"/>
    </location>
</feature>
<feature type="sequence variant" id="VAR_070845" description="In COXPD17; dbSNP:rs397515466." evidence="17">
    <original>L</original>
    <variation>F</variation>
    <location>
        <position position="423"/>
    </location>
</feature>
<feature type="sequence variant" id="VAR_038211" description="In dbSNP:rs3760317.">
    <original>D</original>
    <variation>N</variation>
    <location>
        <position position="436"/>
    </location>
</feature>
<feature type="sequence variant" id="VAR_017427" description="In HPC2; dbSNP:rs752234492." evidence="7">
    <original>G</original>
    <variation>R</variation>
    <location>
        <position position="487"/>
    </location>
</feature>
<feature type="sequence variant" id="VAR_070846" description="In COXPD17; dbSNP:rs397515463." evidence="17">
    <original>T</original>
    <variation>I</variation>
    <location>
        <position position="520"/>
    </location>
</feature>
<feature type="sequence variant" id="VAR_017428" description="In HPC2; risk factor for disease development; does not affect the enzymatic activity; dbSNP:rs5030739." evidence="4 5 7 8 9 10 11">
    <original>A</original>
    <variation>T</variation>
    <location>
        <position position="541"/>
    </location>
</feature>
<feature type="sequence variant" id="VAR_017429" description="In HPC2; higher frequency in prostate cancer cases; dbSNP:rs119484087." evidence="6">
    <original>E</original>
    <variation>V</variation>
    <location>
        <position position="622"/>
    </location>
</feature>
<feature type="sequence variant" id="VAR_017430" description="In dbSNP:rs78105154." evidence="12">
    <original>S</original>
    <variation>L</variation>
    <location>
        <position position="627"/>
    </location>
</feature>
<feature type="sequence variant" id="VAR_017431" description="In HPC2; does not affect the enzymatic activity; dbSNP:rs119484086." evidence="5 10">
    <original>R</original>
    <variation>H</variation>
    <location>
        <position position="781"/>
    </location>
</feature>
<feature type="sequence variant" id="VAR_017432" description="In HPC2; dbSNP:rs770669443." evidence="7">
    <original>G</original>
    <variation>R</variation>
    <location>
        <position position="806"/>
    </location>
</feature>
<feature type="sequence conflict" description="In Ref. 2; AK001392." evidence="21" ref="2">
    <original>V</original>
    <variation>M</variation>
    <location>
        <position position="165"/>
    </location>
</feature>
<feature type="sequence conflict" description="In Ref. 2; AK001392." evidence="21" ref="2">
    <location>
        <position position="406"/>
    </location>
</feature>
<feature type="sequence conflict" description="In Ref. 2; AK001392." evidence="21" ref="2">
    <original>H</original>
    <variation>Y</variation>
    <location>
        <position position="592"/>
    </location>
</feature>
<feature type="sequence conflict" description="In Ref. 2; AK001392." evidence="21" ref="2">
    <original>F</original>
    <variation>L</variation>
    <location>
        <position position="754"/>
    </location>
</feature>
<feature type="helix" evidence="25">
    <location>
        <begin position="38"/>
        <end position="46"/>
    </location>
</feature>
<feature type="turn" evidence="25">
    <location>
        <begin position="47"/>
        <end position="49"/>
    </location>
</feature>
<feature type="strand" evidence="25">
    <location>
        <begin position="58"/>
        <end position="65"/>
    </location>
</feature>
<feature type="turn" evidence="25">
    <location>
        <begin position="68"/>
        <end position="70"/>
    </location>
</feature>
<feature type="strand" evidence="25">
    <location>
        <begin position="72"/>
        <end position="80"/>
    </location>
</feature>
<feature type="strand" evidence="25">
    <location>
        <begin position="82"/>
        <end position="85"/>
    </location>
</feature>
<feature type="helix" evidence="25">
    <location>
        <begin position="91"/>
        <end position="97"/>
    </location>
</feature>
<feature type="helix" evidence="26">
    <location>
        <begin position="102"/>
        <end position="104"/>
    </location>
</feature>
<feature type="strand" evidence="25">
    <location>
        <begin position="107"/>
        <end position="109"/>
    </location>
</feature>
<feature type="strand" evidence="25">
    <location>
        <begin position="111"/>
        <end position="114"/>
    </location>
</feature>
<feature type="helix" evidence="25">
    <location>
        <begin position="115"/>
        <end position="118"/>
    </location>
</feature>
<feature type="helix" evidence="25">
    <location>
        <begin position="121"/>
        <end position="131"/>
    </location>
</feature>
<feature type="strand" evidence="25">
    <location>
        <begin position="134"/>
        <end position="141"/>
    </location>
</feature>
<feature type="helix" evidence="25">
    <location>
        <begin position="144"/>
        <end position="155"/>
    </location>
</feature>
<feature type="strand" evidence="25">
    <location>
        <begin position="161"/>
        <end position="167"/>
    </location>
</feature>
<feature type="strand" evidence="25">
    <location>
        <begin position="176"/>
        <end position="186"/>
    </location>
</feature>
<feature type="strand" evidence="25">
    <location>
        <begin position="239"/>
        <end position="247"/>
    </location>
</feature>
<feature type="helix" evidence="25">
    <location>
        <begin position="256"/>
        <end position="262"/>
    </location>
</feature>
<feature type="helix" evidence="25">
    <location>
        <begin position="268"/>
        <end position="270"/>
    </location>
</feature>
<feature type="helix" evidence="25">
    <location>
        <begin position="272"/>
        <end position="279"/>
    </location>
</feature>
<feature type="strand" evidence="25">
    <location>
        <begin position="284"/>
        <end position="286"/>
    </location>
</feature>
<feature type="strand" evidence="25">
    <location>
        <begin position="289"/>
        <end position="291"/>
    </location>
</feature>
<feature type="turn" evidence="25">
    <location>
        <begin position="293"/>
        <end position="296"/>
    </location>
</feature>
<feature type="strand" evidence="25">
    <location>
        <begin position="305"/>
        <end position="310"/>
    </location>
</feature>
<feature type="helix" evidence="25">
    <location>
        <begin position="314"/>
        <end position="316"/>
    </location>
</feature>
<feature type="helix" evidence="25">
    <location>
        <begin position="317"/>
        <end position="321"/>
    </location>
</feature>
<feature type="helix" evidence="25">
    <location>
        <begin position="324"/>
        <end position="330"/>
    </location>
</feature>
<feature type="strand" evidence="25">
    <location>
        <begin position="333"/>
        <end position="335"/>
    </location>
</feature>
<feature type="strand" evidence="25">
    <location>
        <begin position="338"/>
        <end position="343"/>
    </location>
</feature>
<feature type="helix" evidence="25">
    <location>
        <begin position="346"/>
        <end position="349"/>
    </location>
</feature>
<feature type="helix" evidence="25">
    <location>
        <begin position="352"/>
        <end position="360"/>
    </location>
</feature>
<feature type="strand" evidence="25">
    <location>
        <begin position="365"/>
        <end position="369"/>
    </location>
</feature>
<feature type="helix" evidence="25">
    <location>
        <begin position="380"/>
        <end position="392"/>
    </location>
</feature>
<feature type="turn" evidence="25">
    <location>
        <begin position="394"/>
        <end position="396"/>
    </location>
</feature>
<feature type="strand" evidence="26">
    <location>
        <begin position="416"/>
        <end position="418"/>
    </location>
</feature>
<feature type="strand" evidence="25">
    <location>
        <begin position="424"/>
        <end position="429"/>
    </location>
</feature>
<feature type="strand" evidence="25">
    <location>
        <begin position="432"/>
        <end position="434"/>
    </location>
</feature>
<feature type="helix" evidence="25">
    <location>
        <begin position="443"/>
        <end position="451"/>
    </location>
</feature>
<feature type="strand" evidence="25">
    <location>
        <begin position="453"/>
        <end position="455"/>
    </location>
</feature>
<feature type="helix" evidence="25">
    <location>
        <begin position="456"/>
        <end position="468"/>
    </location>
</feature>
<feature type="strand" evidence="25">
    <location>
        <begin position="481"/>
        <end position="487"/>
    </location>
</feature>
<feature type="strand" evidence="25">
    <location>
        <begin position="489"/>
        <end position="492"/>
    </location>
</feature>
<feature type="strand" evidence="25">
    <location>
        <begin position="499"/>
        <end position="507"/>
    </location>
</feature>
<feature type="strand" evidence="25">
    <location>
        <begin position="510"/>
        <end position="514"/>
    </location>
</feature>
<feature type="helix" evidence="25">
    <location>
        <begin position="520"/>
        <end position="528"/>
    </location>
</feature>
<feature type="helix" evidence="25">
    <location>
        <begin position="529"/>
        <end position="531"/>
    </location>
</feature>
<feature type="helix" evidence="25">
    <location>
        <begin position="532"/>
        <end position="537"/>
    </location>
</feature>
<feature type="strand" evidence="25">
    <location>
        <begin position="539"/>
        <end position="543"/>
    </location>
</feature>
<feature type="helix" evidence="25">
    <location>
        <begin position="549"/>
        <end position="552"/>
    </location>
</feature>
<feature type="helix" evidence="25">
    <location>
        <begin position="555"/>
        <end position="569"/>
    </location>
</feature>
<feature type="strand" evidence="25">
    <location>
        <begin position="576"/>
        <end position="580"/>
    </location>
</feature>
<feature type="helix" evidence="25">
    <location>
        <begin position="584"/>
        <end position="594"/>
    </location>
</feature>
<feature type="helix" evidence="25">
    <location>
        <begin position="599"/>
        <end position="601"/>
    </location>
</feature>
<feature type="strand" evidence="25">
    <location>
        <begin position="602"/>
        <end position="608"/>
    </location>
</feature>
<feature type="helix" evidence="25">
    <location>
        <begin position="619"/>
        <end position="632"/>
    </location>
</feature>
<feature type="strand" evidence="25">
    <location>
        <begin position="634"/>
        <end position="639"/>
    </location>
</feature>
<feature type="strand" evidence="25">
    <location>
        <begin position="643"/>
        <end position="647"/>
    </location>
</feature>
<feature type="strand" evidence="25">
    <location>
        <begin position="651"/>
        <end position="655"/>
    </location>
</feature>
<feature type="strand" evidence="25">
    <location>
        <begin position="660"/>
        <end position="663"/>
    </location>
</feature>
<feature type="helix" evidence="25">
    <location>
        <begin position="671"/>
        <end position="676"/>
    </location>
</feature>
<feature type="turn" evidence="25">
    <location>
        <begin position="677"/>
        <end position="679"/>
    </location>
</feature>
<feature type="strand" evidence="25">
    <location>
        <begin position="681"/>
        <end position="686"/>
    </location>
</feature>
<feature type="helix" evidence="25">
    <location>
        <begin position="694"/>
        <end position="700"/>
    </location>
</feature>
<feature type="helix" evidence="25">
    <location>
        <begin position="705"/>
        <end position="715"/>
    </location>
</feature>
<feature type="strand" evidence="25">
    <location>
        <begin position="720"/>
        <end position="723"/>
    </location>
</feature>
<feature type="strand" evidence="25">
    <location>
        <begin position="729"/>
        <end position="731"/>
    </location>
</feature>
<feature type="turn" evidence="26">
    <location>
        <begin position="740"/>
        <end position="742"/>
    </location>
</feature>
<feature type="strand" evidence="25">
    <location>
        <begin position="743"/>
        <end position="745"/>
    </location>
</feature>
<feature type="strand" evidence="25">
    <location>
        <begin position="750"/>
        <end position="753"/>
    </location>
</feature>
<feature type="helix" evidence="25">
    <location>
        <begin position="754"/>
        <end position="763"/>
    </location>
</feature>
<feature type="helix" evidence="25">
    <location>
        <begin position="764"/>
        <end position="770"/>
    </location>
</feature>
<feature type="helix" evidence="25">
    <location>
        <begin position="772"/>
        <end position="790"/>
    </location>
</feature>